<feature type="chain" id="PRO_1000074209" description="Probable tRNA sulfurtransferase">
    <location>
        <begin position="1"/>
        <end position="401"/>
    </location>
</feature>
<feature type="domain" description="THUMP" evidence="1">
    <location>
        <begin position="60"/>
        <end position="165"/>
    </location>
</feature>
<feature type="binding site" evidence="1">
    <location>
        <begin position="183"/>
        <end position="184"/>
    </location>
    <ligand>
        <name>ATP</name>
        <dbReference type="ChEBI" id="CHEBI:30616"/>
    </ligand>
</feature>
<feature type="binding site" evidence="1">
    <location>
        <begin position="208"/>
        <end position="209"/>
    </location>
    <ligand>
        <name>ATP</name>
        <dbReference type="ChEBI" id="CHEBI:30616"/>
    </ligand>
</feature>
<feature type="binding site" evidence="1">
    <location>
        <position position="265"/>
    </location>
    <ligand>
        <name>ATP</name>
        <dbReference type="ChEBI" id="CHEBI:30616"/>
    </ligand>
</feature>
<feature type="binding site" evidence="1">
    <location>
        <position position="287"/>
    </location>
    <ligand>
        <name>ATP</name>
        <dbReference type="ChEBI" id="CHEBI:30616"/>
    </ligand>
</feature>
<feature type="binding site" evidence="1">
    <location>
        <position position="296"/>
    </location>
    <ligand>
        <name>ATP</name>
        <dbReference type="ChEBI" id="CHEBI:30616"/>
    </ligand>
</feature>
<sequence length="401" mass="45434">MKYDHILVRFGEISTKGKNRKKFIEKLRQHIRFVLKDFVALKYASDRDRITIMLNGEDPEPISEQLKGVFGIQSFSLAVKCETNLDAIKEAALTAVQEVYEQGNTFKVSTKRSYKQFELDSNEMNREIGGHVLRNTENLTVNVKQPDVHLRIEIREQATYITFKDVKGAGGLPVGSSGRAMLMLSGGFDSPVAGYQAMKRGIQIEAVHFFSPPYTSERAKQKVIDLTECLAAYGGEIKLHIVPFTKIQELIHKQVPENYTMTSTRRMMLKIADKIREKRDALAIITGESLGQVASQTLESMYAINHVTNTPIIRPLIAVDKNDIIDEARRIGTYETSIQPFEDCCTIFTPPSPKTKPKLEKVERYESFADFEPMLDEAVEQIETIIVKNEKKAADEFADLF</sequence>
<accession>A8FG94</accession>
<reference key="1">
    <citation type="journal article" date="2007" name="PLoS ONE">
        <title>Paradoxical DNA repair and peroxide resistance gene conservation in Bacillus pumilus SAFR-032.</title>
        <authorList>
            <person name="Gioia J."/>
            <person name="Yerrapragada S."/>
            <person name="Qin X."/>
            <person name="Jiang H."/>
            <person name="Igboeli O.C."/>
            <person name="Muzny D."/>
            <person name="Dugan-Rocha S."/>
            <person name="Ding Y."/>
            <person name="Hawes A."/>
            <person name="Liu W."/>
            <person name="Perez L."/>
            <person name="Kovar C."/>
            <person name="Dinh H."/>
            <person name="Lee S."/>
            <person name="Nazareth L."/>
            <person name="Blyth P."/>
            <person name="Holder M."/>
            <person name="Buhay C."/>
            <person name="Tirumalai M.R."/>
            <person name="Liu Y."/>
            <person name="Dasgupta I."/>
            <person name="Bokhetache L."/>
            <person name="Fujita M."/>
            <person name="Karouia F."/>
            <person name="Eswara Moorthy P."/>
            <person name="Siefert J."/>
            <person name="Uzman A."/>
            <person name="Buzumbo P."/>
            <person name="Verma A."/>
            <person name="Zwiya H."/>
            <person name="McWilliams B.D."/>
            <person name="Olowu A."/>
            <person name="Clinkenbeard K.D."/>
            <person name="Newcombe D."/>
            <person name="Golebiewski L."/>
            <person name="Petrosino J.F."/>
            <person name="Nicholson W.L."/>
            <person name="Fox G.E."/>
            <person name="Venkateswaran K."/>
            <person name="Highlander S.K."/>
            <person name="Weinstock G.M."/>
        </authorList>
    </citation>
    <scope>NUCLEOTIDE SEQUENCE [LARGE SCALE GENOMIC DNA]</scope>
    <source>
        <strain>SAFR-032</strain>
    </source>
</reference>
<keyword id="KW-0067">ATP-binding</keyword>
<keyword id="KW-0963">Cytoplasm</keyword>
<keyword id="KW-0547">Nucleotide-binding</keyword>
<keyword id="KW-0694">RNA-binding</keyword>
<keyword id="KW-0784">Thiamine biosynthesis</keyword>
<keyword id="KW-0808">Transferase</keyword>
<keyword id="KW-0820">tRNA-binding</keyword>
<protein>
    <recommendedName>
        <fullName evidence="1">Probable tRNA sulfurtransferase</fullName>
        <ecNumber evidence="1">2.8.1.4</ecNumber>
    </recommendedName>
    <alternativeName>
        <fullName evidence="1">Sulfur carrier protein ThiS sulfurtransferase</fullName>
    </alternativeName>
    <alternativeName>
        <fullName evidence="1">Thiamine biosynthesis protein ThiI</fullName>
    </alternativeName>
    <alternativeName>
        <fullName evidence="1">tRNA 4-thiouridine synthase</fullName>
    </alternativeName>
</protein>
<proteinExistence type="inferred from homology"/>
<comment type="function">
    <text evidence="1">Catalyzes the ATP-dependent transfer of a sulfur to tRNA to produce 4-thiouridine in position 8 of tRNAs, which functions as a near-UV photosensor. Also catalyzes the transfer of sulfur to the sulfur carrier protein ThiS, forming ThiS-thiocarboxylate. This is a step in the synthesis of thiazole, in the thiamine biosynthesis pathway. The sulfur is donated as persulfide by IscS.</text>
</comment>
<comment type="catalytic activity">
    <reaction evidence="1">
        <text>[ThiI sulfur-carrier protein]-S-sulfanyl-L-cysteine + a uridine in tRNA + 2 reduced [2Fe-2S]-[ferredoxin] + ATP + H(+) = [ThiI sulfur-carrier protein]-L-cysteine + a 4-thiouridine in tRNA + 2 oxidized [2Fe-2S]-[ferredoxin] + AMP + diphosphate</text>
        <dbReference type="Rhea" id="RHEA:24176"/>
        <dbReference type="Rhea" id="RHEA-COMP:10000"/>
        <dbReference type="Rhea" id="RHEA-COMP:10001"/>
        <dbReference type="Rhea" id="RHEA-COMP:13337"/>
        <dbReference type="Rhea" id="RHEA-COMP:13338"/>
        <dbReference type="Rhea" id="RHEA-COMP:13339"/>
        <dbReference type="Rhea" id="RHEA-COMP:13340"/>
        <dbReference type="ChEBI" id="CHEBI:15378"/>
        <dbReference type="ChEBI" id="CHEBI:29950"/>
        <dbReference type="ChEBI" id="CHEBI:30616"/>
        <dbReference type="ChEBI" id="CHEBI:33019"/>
        <dbReference type="ChEBI" id="CHEBI:33737"/>
        <dbReference type="ChEBI" id="CHEBI:33738"/>
        <dbReference type="ChEBI" id="CHEBI:61963"/>
        <dbReference type="ChEBI" id="CHEBI:65315"/>
        <dbReference type="ChEBI" id="CHEBI:136798"/>
        <dbReference type="ChEBI" id="CHEBI:456215"/>
        <dbReference type="EC" id="2.8.1.4"/>
    </reaction>
</comment>
<comment type="catalytic activity">
    <reaction evidence="1">
        <text>[ThiS sulfur-carrier protein]-C-terminal Gly-Gly-AMP + S-sulfanyl-L-cysteinyl-[cysteine desulfurase] + AH2 = [ThiS sulfur-carrier protein]-C-terminal-Gly-aminoethanethioate + L-cysteinyl-[cysteine desulfurase] + A + AMP + 2 H(+)</text>
        <dbReference type="Rhea" id="RHEA:43340"/>
        <dbReference type="Rhea" id="RHEA-COMP:12157"/>
        <dbReference type="Rhea" id="RHEA-COMP:12158"/>
        <dbReference type="Rhea" id="RHEA-COMP:12910"/>
        <dbReference type="Rhea" id="RHEA-COMP:19908"/>
        <dbReference type="ChEBI" id="CHEBI:13193"/>
        <dbReference type="ChEBI" id="CHEBI:15378"/>
        <dbReference type="ChEBI" id="CHEBI:17499"/>
        <dbReference type="ChEBI" id="CHEBI:29950"/>
        <dbReference type="ChEBI" id="CHEBI:61963"/>
        <dbReference type="ChEBI" id="CHEBI:90618"/>
        <dbReference type="ChEBI" id="CHEBI:232372"/>
        <dbReference type="ChEBI" id="CHEBI:456215"/>
    </reaction>
</comment>
<comment type="pathway">
    <text evidence="1">Cofactor biosynthesis; thiamine diphosphate biosynthesis.</text>
</comment>
<comment type="subcellular location">
    <subcellularLocation>
        <location evidence="1">Cytoplasm</location>
    </subcellularLocation>
</comment>
<comment type="similarity">
    <text evidence="1">Belongs to the ThiI family.</text>
</comment>
<gene>
    <name evidence="1" type="primary">thiI</name>
    <name type="ordered locus">BPUM_2602</name>
</gene>
<organism>
    <name type="scientific">Bacillus pumilus (strain SAFR-032)</name>
    <dbReference type="NCBI Taxonomy" id="315750"/>
    <lineage>
        <taxon>Bacteria</taxon>
        <taxon>Bacillati</taxon>
        <taxon>Bacillota</taxon>
        <taxon>Bacilli</taxon>
        <taxon>Bacillales</taxon>
        <taxon>Bacillaceae</taxon>
        <taxon>Bacillus</taxon>
    </lineage>
</organism>
<name>THII_BACP2</name>
<dbReference type="EC" id="2.8.1.4" evidence="1"/>
<dbReference type="EMBL" id="CP000813">
    <property type="protein sequence ID" value="ABV63261.1"/>
    <property type="molecule type" value="Genomic_DNA"/>
</dbReference>
<dbReference type="RefSeq" id="WP_012010897.1">
    <property type="nucleotide sequence ID" value="NC_009848.4"/>
</dbReference>
<dbReference type="SMR" id="A8FG94"/>
<dbReference type="STRING" id="315750.BPUM_2602"/>
<dbReference type="GeneID" id="5621867"/>
<dbReference type="KEGG" id="bpu:BPUM_2602"/>
<dbReference type="eggNOG" id="COG0301">
    <property type="taxonomic scope" value="Bacteria"/>
</dbReference>
<dbReference type="HOGENOM" id="CLU_037952_4_0_9"/>
<dbReference type="OrthoDB" id="9773948at2"/>
<dbReference type="UniPathway" id="UPA00060"/>
<dbReference type="Proteomes" id="UP000001355">
    <property type="component" value="Chromosome"/>
</dbReference>
<dbReference type="GO" id="GO:0005829">
    <property type="term" value="C:cytosol"/>
    <property type="evidence" value="ECO:0007669"/>
    <property type="project" value="TreeGrafter"/>
</dbReference>
<dbReference type="GO" id="GO:0005524">
    <property type="term" value="F:ATP binding"/>
    <property type="evidence" value="ECO:0007669"/>
    <property type="project" value="UniProtKB-UniRule"/>
</dbReference>
<dbReference type="GO" id="GO:0004810">
    <property type="term" value="F:CCA tRNA nucleotidyltransferase activity"/>
    <property type="evidence" value="ECO:0007669"/>
    <property type="project" value="InterPro"/>
</dbReference>
<dbReference type="GO" id="GO:0000049">
    <property type="term" value="F:tRNA binding"/>
    <property type="evidence" value="ECO:0007669"/>
    <property type="project" value="UniProtKB-UniRule"/>
</dbReference>
<dbReference type="GO" id="GO:0140741">
    <property type="term" value="F:tRNA-uracil-4 sulfurtransferase activity"/>
    <property type="evidence" value="ECO:0007669"/>
    <property type="project" value="UniProtKB-EC"/>
</dbReference>
<dbReference type="GO" id="GO:0009228">
    <property type="term" value="P:thiamine biosynthetic process"/>
    <property type="evidence" value="ECO:0007669"/>
    <property type="project" value="UniProtKB-KW"/>
</dbReference>
<dbReference type="GO" id="GO:0009229">
    <property type="term" value="P:thiamine diphosphate biosynthetic process"/>
    <property type="evidence" value="ECO:0007669"/>
    <property type="project" value="UniProtKB-UniRule"/>
</dbReference>
<dbReference type="GO" id="GO:0052837">
    <property type="term" value="P:thiazole biosynthetic process"/>
    <property type="evidence" value="ECO:0007669"/>
    <property type="project" value="TreeGrafter"/>
</dbReference>
<dbReference type="GO" id="GO:0002937">
    <property type="term" value="P:tRNA 4-thiouridine biosynthesis"/>
    <property type="evidence" value="ECO:0007669"/>
    <property type="project" value="TreeGrafter"/>
</dbReference>
<dbReference type="CDD" id="cd01712">
    <property type="entry name" value="PPase_ThiI"/>
    <property type="match status" value="1"/>
</dbReference>
<dbReference type="CDD" id="cd11716">
    <property type="entry name" value="THUMP_ThiI"/>
    <property type="match status" value="1"/>
</dbReference>
<dbReference type="FunFam" id="3.40.50.620:FF:000053">
    <property type="entry name" value="Probable tRNA sulfurtransferase"/>
    <property type="match status" value="1"/>
</dbReference>
<dbReference type="Gene3D" id="3.30.2130.30">
    <property type="match status" value="1"/>
</dbReference>
<dbReference type="Gene3D" id="3.40.50.620">
    <property type="entry name" value="HUPs"/>
    <property type="match status" value="1"/>
</dbReference>
<dbReference type="HAMAP" id="MF_00021">
    <property type="entry name" value="ThiI"/>
    <property type="match status" value="1"/>
</dbReference>
<dbReference type="InterPro" id="IPR014729">
    <property type="entry name" value="Rossmann-like_a/b/a_fold"/>
</dbReference>
<dbReference type="InterPro" id="IPR020536">
    <property type="entry name" value="ThiI_AANH"/>
</dbReference>
<dbReference type="InterPro" id="IPR054173">
    <property type="entry name" value="ThiI_fer"/>
</dbReference>
<dbReference type="InterPro" id="IPR049961">
    <property type="entry name" value="ThiI_N"/>
</dbReference>
<dbReference type="InterPro" id="IPR004114">
    <property type="entry name" value="THUMP_dom"/>
</dbReference>
<dbReference type="InterPro" id="IPR049962">
    <property type="entry name" value="THUMP_ThiI"/>
</dbReference>
<dbReference type="InterPro" id="IPR003720">
    <property type="entry name" value="tRNA_STrfase"/>
</dbReference>
<dbReference type="InterPro" id="IPR050102">
    <property type="entry name" value="tRNA_sulfurtransferase_ThiI"/>
</dbReference>
<dbReference type="NCBIfam" id="TIGR00342">
    <property type="entry name" value="tRNA uracil 4-sulfurtransferase ThiI"/>
    <property type="match status" value="1"/>
</dbReference>
<dbReference type="PANTHER" id="PTHR43209">
    <property type="entry name" value="TRNA SULFURTRANSFERASE"/>
    <property type="match status" value="1"/>
</dbReference>
<dbReference type="PANTHER" id="PTHR43209:SF1">
    <property type="entry name" value="TRNA SULFURTRANSFERASE"/>
    <property type="match status" value="1"/>
</dbReference>
<dbReference type="Pfam" id="PF02568">
    <property type="entry name" value="ThiI"/>
    <property type="match status" value="1"/>
</dbReference>
<dbReference type="Pfam" id="PF22025">
    <property type="entry name" value="ThiI_fer"/>
    <property type="match status" value="1"/>
</dbReference>
<dbReference type="Pfam" id="PF02926">
    <property type="entry name" value="THUMP"/>
    <property type="match status" value="1"/>
</dbReference>
<dbReference type="SMART" id="SM00981">
    <property type="entry name" value="THUMP"/>
    <property type="match status" value="1"/>
</dbReference>
<dbReference type="SUPFAM" id="SSF52402">
    <property type="entry name" value="Adenine nucleotide alpha hydrolases-like"/>
    <property type="match status" value="1"/>
</dbReference>
<dbReference type="SUPFAM" id="SSF143437">
    <property type="entry name" value="THUMP domain-like"/>
    <property type="match status" value="1"/>
</dbReference>
<dbReference type="PROSITE" id="PS51165">
    <property type="entry name" value="THUMP"/>
    <property type="match status" value="1"/>
</dbReference>
<evidence type="ECO:0000255" key="1">
    <source>
        <dbReference type="HAMAP-Rule" id="MF_00021"/>
    </source>
</evidence>